<keyword id="KW-0028">Amino-acid biosynthesis</keyword>
<keyword id="KW-0055">Arginine biosynthesis</keyword>
<keyword id="KW-0963">Cytoplasm</keyword>
<keyword id="KW-0521">NADP</keyword>
<keyword id="KW-0560">Oxidoreductase</keyword>
<organism>
    <name type="scientific">Ehrlichia ruminantium (strain Gardel)</name>
    <dbReference type="NCBI Taxonomy" id="302409"/>
    <lineage>
        <taxon>Bacteria</taxon>
        <taxon>Pseudomonadati</taxon>
        <taxon>Pseudomonadota</taxon>
        <taxon>Alphaproteobacteria</taxon>
        <taxon>Rickettsiales</taxon>
        <taxon>Anaplasmataceae</taxon>
        <taxon>Ehrlichia</taxon>
    </lineage>
</organism>
<protein>
    <recommendedName>
        <fullName evidence="1">N-acetyl-gamma-glutamyl-phosphate reductase</fullName>
        <shortName evidence="1">AGPR</shortName>
        <ecNumber evidence="1">1.2.1.38</ecNumber>
    </recommendedName>
    <alternativeName>
        <fullName evidence="1">N-acetyl-glutamate semialdehyde dehydrogenase</fullName>
        <shortName evidence="1">NAGSA dehydrogenase</shortName>
    </alternativeName>
</protein>
<dbReference type="EC" id="1.2.1.38" evidence="1"/>
<dbReference type="EMBL" id="CR925677">
    <property type="protein sequence ID" value="CAI28270.1"/>
    <property type="molecule type" value="Genomic_DNA"/>
</dbReference>
<dbReference type="RefSeq" id="WP_011155462.1">
    <property type="nucleotide sequence ID" value="NC_006831.1"/>
</dbReference>
<dbReference type="SMR" id="Q5FGD5"/>
<dbReference type="GeneID" id="33057984"/>
<dbReference type="KEGG" id="erg:ERGA_CDS_08180"/>
<dbReference type="HOGENOM" id="CLU_006384_0_1_5"/>
<dbReference type="OrthoDB" id="9801289at2"/>
<dbReference type="UniPathway" id="UPA00068">
    <property type="reaction ID" value="UER00108"/>
</dbReference>
<dbReference type="Proteomes" id="UP000000533">
    <property type="component" value="Chromosome"/>
</dbReference>
<dbReference type="GO" id="GO:0005737">
    <property type="term" value="C:cytoplasm"/>
    <property type="evidence" value="ECO:0007669"/>
    <property type="project" value="UniProtKB-SubCell"/>
</dbReference>
<dbReference type="GO" id="GO:0003942">
    <property type="term" value="F:N-acetyl-gamma-glutamyl-phosphate reductase activity"/>
    <property type="evidence" value="ECO:0007669"/>
    <property type="project" value="UniProtKB-UniRule"/>
</dbReference>
<dbReference type="GO" id="GO:0051287">
    <property type="term" value="F:NAD binding"/>
    <property type="evidence" value="ECO:0007669"/>
    <property type="project" value="InterPro"/>
</dbReference>
<dbReference type="GO" id="GO:0070401">
    <property type="term" value="F:NADP+ binding"/>
    <property type="evidence" value="ECO:0007669"/>
    <property type="project" value="InterPro"/>
</dbReference>
<dbReference type="GO" id="GO:0006526">
    <property type="term" value="P:L-arginine biosynthetic process"/>
    <property type="evidence" value="ECO:0007669"/>
    <property type="project" value="UniProtKB-UniRule"/>
</dbReference>
<dbReference type="CDD" id="cd23934">
    <property type="entry name" value="AGPR_1_C"/>
    <property type="match status" value="1"/>
</dbReference>
<dbReference type="CDD" id="cd17895">
    <property type="entry name" value="AGPR_1_N"/>
    <property type="match status" value="1"/>
</dbReference>
<dbReference type="FunFam" id="3.30.360.10:FF:000014">
    <property type="entry name" value="N-acetyl-gamma-glutamyl-phosphate reductase"/>
    <property type="match status" value="1"/>
</dbReference>
<dbReference type="Gene3D" id="3.30.360.10">
    <property type="entry name" value="Dihydrodipicolinate Reductase, domain 2"/>
    <property type="match status" value="1"/>
</dbReference>
<dbReference type="Gene3D" id="3.40.50.720">
    <property type="entry name" value="NAD(P)-binding Rossmann-like Domain"/>
    <property type="match status" value="1"/>
</dbReference>
<dbReference type="HAMAP" id="MF_00150">
    <property type="entry name" value="ArgC_type1"/>
    <property type="match status" value="1"/>
</dbReference>
<dbReference type="InterPro" id="IPR023013">
    <property type="entry name" value="AGPR_AS"/>
</dbReference>
<dbReference type="InterPro" id="IPR000706">
    <property type="entry name" value="AGPR_type-1"/>
</dbReference>
<dbReference type="InterPro" id="IPR036291">
    <property type="entry name" value="NAD(P)-bd_dom_sf"/>
</dbReference>
<dbReference type="InterPro" id="IPR050085">
    <property type="entry name" value="NAGSA_dehydrogenase"/>
</dbReference>
<dbReference type="InterPro" id="IPR000534">
    <property type="entry name" value="Semialdehyde_DH_NAD-bd"/>
</dbReference>
<dbReference type="NCBIfam" id="TIGR01850">
    <property type="entry name" value="argC"/>
    <property type="match status" value="1"/>
</dbReference>
<dbReference type="PANTHER" id="PTHR32338:SF10">
    <property type="entry name" value="N-ACETYL-GAMMA-GLUTAMYL-PHOSPHATE REDUCTASE, CHLOROPLASTIC-RELATED"/>
    <property type="match status" value="1"/>
</dbReference>
<dbReference type="PANTHER" id="PTHR32338">
    <property type="entry name" value="N-ACETYL-GAMMA-GLUTAMYL-PHOSPHATE REDUCTASE, CHLOROPLASTIC-RELATED-RELATED"/>
    <property type="match status" value="1"/>
</dbReference>
<dbReference type="Pfam" id="PF01118">
    <property type="entry name" value="Semialdhyde_dh"/>
    <property type="match status" value="1"/>
</dbReference>
<dbReference type="Pfam" id="PF22698">
    <property type="entry name" value="Semialdhyde_dhC_1"/>
    <property type="match status" value="1"/>
</dbReference>
<dbReference type="SMART" id="SM00859">
    <property type="entry name" value="Semialdhyde_dh"/>
    <property type="match status" value="1"/>
</dbReference>
<dbReference type="SUPFAM" id="SSF55347">
    <property type="entry name" value="Glyceraldehyde-3-phosphate dehydrogenase-like, C-terminal domain"/>
    <property type="match status" value="1"/>
</dbReference>
<dbReference type="SUPFAM" id="SSF51735">
    <property type="entry name" value="NAD(P)-binding Rossmann-fold domains"/>
    <property type="match status" value="1"/>
</dbReference>
<dbReference type="PROSITE" id="PS01224">
    <property type="entry name" value="ARGC"/>
    <property type="match status" value="1"/>
</dbReference>
<evidence type="ECO:0000255" key="1">
    <source>
        <dbReference type="HAMAP-Rule" id="MF_00150"/>
    </source>
</evidence>
<gene>
    <name evidence="1" type="primary">argC</name>
    <name type="ordered locus">ERGA_CDS_08180</name>
</gene>
<name>ARGC_EHRRG</name>
<accession>Q5FGD5</accession>
<proteinExistence type="inferred from homology"/>
<sequence>MSYQVSVAVVGATGYVGVELVRLLLFHPMVKIKYLCATQSIGSLLSSHYDHVLKDSIPVSISCFSSIDLSKVDVIFLCLPHGQSNEIVKKIHNEVKIIIDLSADFRIKDIDTYKEWYGAHCCPDLIQDFVYGLTEIYWEEIKKSRFVACPGCYATSALVPLFPLLRLRLVKSQNIIVDAKSGVSGAGRSVDQKKLFCEIHDVIKSYNISKHRHIPEIEQELCFAACQENINVQFVPNLIPVKRGMLSSIYLELEEGVSPIDIREALLVFYKDSKFIFIDEEKAITTKSVIGTNYCYIGVFPGRIPNTVIIVCNIDNLLKGASGQAVQNFNIMMSCDETTALLNIPYL</sequence>
<reference key="1">
    <citation type="journal article" date="2006" name="J. Bacteriol.">
        <title>Comparative genomic analysis of three strains of Ehrlichia ruminantium reveals an active process of genome size plasticity.</title>
        <authorList>
            <person name="Frutos R."/>
            <person name="Viari A."/>
            <person name="Ferraz C."/>
            <person name="Morgat A."/>
            <person name="Eychenie S."/>
            <person name="Kandassamy Y."/>
            <person name="Chantal I."/>
            <person name="Bensaid A."/>
            <person name="Coissac E."/>
            <person name="Vachiery N."/>
            <person name="Demaille J."/>
            <person name="Martinez D."/>
        </authorList>
    </citation>
    <scope>NUCLEOTIDE SEQUENCE [LARGE SCALE GENOMIC DNA]</scope>
    <source>
        <strain>Gardel</strain>
    </source>
</reference>
<comment type="function">
    <text evidence="1">Catalyzes the NADPH-dependent reduction of N-acetyl-5-glutamyl phosphate to yield N-acetyl-L-glutamate 5-semialdehyde.</text>
</comment>
<comment type="catalytic activity">
    <reaction evidence="1">
        <text>N-acetyl-L-glutamate 5-semialdehyde + phosphate + NADP(+) = N-acetyl-L-glutamyl 5-phosphate + NADPH + H(+)</text>
        <dbReference type="Rhea" id="RHEA:21588"/>
        <dbReference type="ChEBI" id="CHEBI:15378"/>
        <dbReference type="ChEBI" id="CHEBI:29123"/>
        <dbReference type="ChEBI" id="CHEBI:43474"/>
        <dbReference type="ChEBI" id="CHEBI:57783"/>
        <dbReference type="ChEBI" id="CHEBI:57936"/>
        <dbReference type="ChEBI" id="CHEBI:58349"/>
        <dbReference type="EC" id="1.2.1.38"/>
    </reaction>
</comment>
<comment type="pathway">
    <text evidence="1">Amino-acid biosynthesis; L-arginine biosynthesis; N(2)-acetyl-L-ornithine from L-glutamate: step 3/4.</text>
</comment>
<comment type="subcellular location">
    <subcellularLocation>
        <location evidence="1">Cytoplasm</location>
    </subcellularLocation>
</comment>
<comment type="similarity">
    <text evidence="1">Belongs to the NAGSA dehydrogenase family. Type 1 subfamily.</text>
</comment>
<feature type="chain" id="PRO_0000112404" description="N-acetyl-gamma-glutamyl-phosphate reductase">
    <location>
        <begin position="1"/>
        <end position="347"/>
    </location>
</feature>
<feature type="active site" evidence="1">
    <location>
        <position position="152"/>
    </location>
</feature>